<sequence>MQQLQNVIENAFERRAEITPANADTVTREAVNQVIALLDSGALRVAEKIDGQWVTHQWLKKAVLLSFRINDNKVMDGAETRYYDKVPMKFADYDEARFQKEGFRVVPPATVRQGAFIARNTVLMPSYVNIGAYVDEGSMVDTWATVGSCAQIGKNVHLSGGVGIGGVLEPLQANPTIIEDNCFIGARSEVVEGVIVEEGSVISMGVYLGQSTRIYDRETGEVHYGRVPAGSVVVSGNLPSKDGSYSLYCAVIVKKVDAKTRGKVGINELLRTID</sequence>
<name>DAPD_SERP5</name>
<comment type="catalytic activity">
    <reaction evidence="1">
        <text>(S)-2,3,4,5-tetrahydrodipicolinate + succinyl-CoA + H2O = (S)-2-succinylamino-6-oxoheptanedioate + CoA</text>
        <dbReference type="Rhea" id="RHEA:17325"/>
        <dbReference type="ChEBI" id="CHEBI:15377"/>
        <dbReference type="ChEBI" id="CHEBI:15685"/>
        <dbReference type="ChEBI" id="CHEBI:16845"/>
        <dbReference type="ChEBI" id="CHEBI:57287"/>
        <dbReference type="ChEBI" id="CHEBI:57292"/>
        <dbReference type="EC" id="2.3.1.117"/>
    </reaction>
</comment>
<comment type="pathway">
    <text evidence="1">Amino-acid biosynthesis; L-lysine biosynthesis via DAP pathway; LL-2,6-diaminopimelate from (S)-tetrahydrodipicolinate (succinylase route): step 1/3.</text>
</comment>
<comment type="subunit">
    <text evidence="1">Homotrimer.</text>
</comment>
<comment type="subcellular location">
    <subcellularLocation>
        <location evidence="1">Cytoplasm</location>
    </subcellularLocation>
</comment>
<comment type="similarity">
    <text evidence="1">Belongs to the transferase hexapeptide repeat family.</text>
</comment>
<feature type="chain" id="PRO_1000062280" description="2,3,4,5-tetrahydropyridine-2,6-dicarboxylate N-succinyltransferase">
    <location>
        <begin position="1"/>
        <end position="274"/>
    </location>
</feature>
<feature type="binding site" evidence="1">
    <location>
        <position position="104"/>
    </location>
    <ligand>
        <name>substrate</name>
    </ligand>
</feature>
<feature type="binding site" evidence="1">
    <location>
        <position position="141"/>
    </location>
    <ligand>
        <name>substrate</name>
    </ligand>
</feature>
<reference key="1">
    <citation type="submission" date="2007-09" db="EMBL/GenBank/DDBJ databases">
        <title>Complete sequence of chromosome of Serratia proteamaculans 568.</title>
        <authorList>
            <consortium name="US DOE Joint Genome Institute"/>
            <person name="Copeland A."/>
            <person name="Lucas S."/>
            <person name="Lapidus A."/>
            <person name="Barry K."/>
            <person name="Glavina del Rio T."/>
            <person name="Dalin E."/>
            <person name="Tice H."/>
            <person name="Pitluck S."/>
            <person name="Chain P."/>
            <person name="Malfatti S."/>
            <person name="Shin M."/>
            <person name="Vergez L."/>
            <person name="Schmutz J."/>
            <person name="Larimer F."/>
            <person name="Land M."/>
            <person name="Hauser L."/>
            <person name="Kyrpides N."/>
            <person name="Kim E."/>
            <person name="Taghavi S."/>
            <person name="Newman L."/>
            <person name="Vangronsveld J."/>
            <person name="van der Lelie D."/>
            <person name="Richardson P."/>
        </authorList>
    </citation>
    <scope>NUCLEOTIDE SEQUENCE [LARGE SCALE GENOMIC DNA]</scope>
    <source>
        <strain>568</strain>
    </source>
</reference>
<organism>
    <name type="scientific">Serratia proteamaculans (strain 568)</name>
    <dbReference type="NCBI Taxonomy" id="399741"/>
    <lineage>
        <taxon>Bacteria</taxon>
        <taxon>Pseudomonadati</taxon>
        <taxon>Pseudomonadota</taxon>
        <taxon>Gammaproteobacteria</taxon>
        <taxon>Enterobacterales</taxon>
        <taxon>Yersiniaceae</taxon>
        <taxon>Serratia</taxon>
    </lineage>
</organism>
<proteinExistence type="inferred from homology"/>
<evidence type="ECO:0000255" key="1">
    <source>
        <dbReference type="HAMAP-Rule" id="MF_00811"/>
    </source>
</evidence>
<gene>
    <name evidence="1" type="primary">dapD</name>
    <name type="ordered locus">Spro_3793</name>
</gene>
<keyword id="KW-0012">Acyltransferase</keyword>
<keyword id="KW-0028">Amino-acid biosynthesis</keyword>
<keyword id="KW-0963">Cytoplasm</keyword>
<keyword id="KW-0220">Diaminopimelate biosynthesis</keyword>
<keyword id="KW-0457">Lysine biosynthesis</keyword>
<keyword id="KW-0677">Repeat</keyword>
<keyword id="KW-0808">Transferase</keyword>
<dbReference type="EC" id="2.3.1.117" evidence="1"/>
<dbReference type="EMBL" id="CP000826">
    <property type="protein sequence ID" value="ABV42889.1"/>
    <property type="molecule type" value="Genomic_DNA"/>
</dbReference>
<dbReference type="SMR" id="A8GIE9"/>
<dbReference type="STRING" id="399741.Spro_3793"/>
<dbReference type="KEGG" id="spe:Spro_3793"/>
<dbReference type="eggNOG" id="COG2171">
    <property type="taxonomic scope" value="Bacteria"/>
</dbReference>
<dbReference type="HOGENOM" id="CLU_050859_0_1_6"/>
<dbReference type="OrthoDB" id="9775362at2"/>
<dbReference type="UniPathway" id="UPA00034">
    <property type="reaction ID" value="UER00019"/>
</dbReference>
<dbReference type="GO" id="GO:0005737">
    <property type="term" value="C:cytoplasm"/>
    <property type="evidence" value="ECO:0007669"/>
    <property type="project" value="UniProtKB-SubCell"/>
</dbReference>
<dbReference type="GO" id="GO:0008666">
    <property type="term" value="F:2,3,4,5-tetrahydropyridine-2,6-dicarboxylate N-succinyltransferase activity"/>
    <property type="evidence" value="ECO:0007669"/>
    <property type="project" value="UniProtKB-UniRule"/>
</dbReference>
<dbReference type="GO" id="GO:0016779">
    <property type="term" value="F:nucleotidyltransferase activity"/>
    <property type="evidence" value="ECO:0007669"/>
    <property type="project" value="TreeGrafter"/>
</dbReference>
<dbReference type="GO" id="GO:0019877">
    <property type="term" value="P:diaminopimelate biosynthetic process"/>
    <property type="evidence" value="ECO:0007669"/>
    <property type="project" value="UniProtKB-UniRule"/>
</dbReference>
<dbReference type="GO" id="GO:0009089">
    <property type="term" value="P:lysine biosynthetic process via diaminopimelate"/>
    <property type="evidence" value="ECO:0007669"/>
    <property type="project" value="UniProtKB-UniRule"/>
</dbReference>
<dbReference type="CDD" id="cd03350">
    <property type="entry name" value="LbH_THP_succinylT"/>
    <property type="match status" value="1"/>
</dbReference>
<dbReference type="FunFam" id="2.160.10.10:FF:000004">
    <property type="entry name" value="2,3,4,5-tetrahydropyridine-2,6-dicarboxylate N-succinyltransferase"/>
    <property type="match status" value="1"/>
</dbReference>
<dbReference type="Gene3D" id="2.160.10.10">
    <property type="entry name" value="Hexapeptide repeat proteins"/>
    <property type="match status" value="1"/>
</dbReference>
<dbReference type="Gene3D" id="1.10.166.10">
    <property type="entry name" value="Tetrahydrodipicolinate-N-succinyltransferase, N-terminal domain"/>
    <property type="match status" value="1"/>
</dbReference>
<dbReference type="HAMAP" id="MF_00811">
    <property type="entry name" value="DapD"/>
    <property type="match status" value="1"/>
</dbReference>
<dbReference type="InterPro" id="IPR005664">
    <property type="entry name" value="DapD_Trfase_Hexpep_rpt_fam"/>
</dbReference>
<dbReference type="InterPro" id="IPR001451">
    <property type="entry name" value="Hexapep"/>
</dbReference>
<dbReference type="InterPro" id="IPR018357">
    <property type="entry name" value="Hexapep_transf_CS"/>
</dbReference>
<dbReference type="InterPro" id="IPR023180">
    <property type="entry name" value="THP_succinylTrfase_dom1"/>
</dbReference>
<dbReference type="InterPro" id="IPR037133">
    <property type="entry name" value="THP_succinylTrfase_N_sf"/>
</dbReference>
<dbReference type="InterPro" id="IPR011004">
    <property type="entry name" value="Trimer_LpxA-like_sf"/>
</dbReference>
<dbReference type="NCBIfam" id="TIGR00965">
    <property type="entry name" value="dapD"/>
    <property type="match status" value="1"/>
</dbReference>
<dbReference type="NCBIfam" id="NF008808">
    <property type="entry name" value="PRK11830.1"/>
    <property type="match status" value="1"/>
</dbReference>
<dbReference type="PANTHER" id="PTHR19136:SF52">
    <property type="entry name" value="2,3,4,5-TETRAHYDROPYRIDINE-2,6-DICARBOXYLATE N-SUCCINYLTRANSFERASE"/>
    <property type="match status" value="1"/>
</dbReference>
<dbReference type="PANTHER" id="PTHR19136">
    <property type="entry name" value="MOLYBDENUM COFACTOR GUANYLYLTRANSFERASE"/>
    <property type="match status" value="1"/>
</dbReference>
<dbReference type="Pfam" id="PF14602">
    <property type="entry name" value="Hexapep_2"/>
    <property type="match status" value="1"/>
</dbReference>
<dbReference type="Pfam" id="PF14805">
    <property type="entry name" value="THDPS_N_2"/>
    <property type="match status" value="1"/>
</dbReference>
<dbReference type="SUPFAM" id="SSF51161">
    <property type="entry name" value="Trimeric LpxA-like enzymes"/>
    <property type="match status" value="1"/>
</dbReference>
<dbReference type="PROSITE" id="PS00101">
    <property type="entry name" value="HEXAPEP_TRANSFERASES"/>
    <property type="match status" value="1"/>
</dbReference>
<protein>
    <recommendedName>
        <fullName evidence="1">2,3,4,5-tetrahydropyridine-2,6-dicarboxylate N-succinyltransferase</fullName>
        <ecNumber evidence="1">2.3.1.117</ecNumber>
    </recommendedName>
    <alternativeName>
        <fullName evidence="1">Tetrahydrodipicolinate N-succinyltransferase</fullName>
        <shortName evidence="1">THDP succinyltransferase</shortName>
        <shortName evidence="1">THP succinyltransferase</shortName>
        <shortName evidence="1">Tetrahydropicolinate succinylase</shortName>
    </alternativeName>
</protein>
<accession>A8GIE9</accession>